<comment type="function">
    <text evidence="1">Catalyzes the transfer of endogenously produced octanoic acid from octanoyl-acyl-carrier-protein onto the lipoyl domain of GcvH, an intermediate carrier during protein lipoylation.</text>
</comment>
<comment type="catalytic activity">
    <reaction evidence="1">
        <text>octanoyl-[ACP] + L-lysyl-[protein] = N(6)-octanoyl-L-lysyl-[protein] + holo-[ACP] + H(+)</text>
        <dbReference type="Rhea" id="RHEA:17665"/>
        <dbReference type="Rhea" id="RHEA-COMP:9636"/>
        <dbReference type="Rhea" id="RHEA-COMP:9685"/>
        <dbReference type="Rhea" id="RHEA-COMP:9752"/>
        <dbReference type="Rhea" id="RHEA-COMP:9928"/>
        <dbReference type="ChEBI" id="CHEBI:15378"/>
        <dbReference type="ChEBI" id="CHEBI:29969"/>
        <dbReference type="ChEBI" id="CHEBI:64479"/>
        <dbReference type="ChEBI" id="CHEBI:78463"/>
        <dbReference type="ChEBI" id="CHEBI:78809"/>
        <dbReference type="EC" id="2.3.1.181"/>
    </reaction>
</comment>
<comment type="pathway">
    <text evidence="1">Protein modification; protein lipoylation via endogenous pathway; protein N(6)-(lipoyl)lysine from octanoyl-[acyl-carrier-protein].</text>
</comment>
<comment type="subunit">
    <text evidence="1">Monomer.</text>
</comment>
<comment type="miscellaneous">
    <text evidence="1">In the reaction, the free carboxyl group of octanoic acid is attached via an amide linkage to the epsilon-amino group of a specific lysine residue of lipoyl domains of lipoate-dependent enzymes. The reaction proceeds via an octanoyl-thioester enzyme intermediate.</text>
</comment>
<comment type="similarity">
    <text evidence="1">Belongs to the octanoyltransferase LipM family.</text>
</comment>
<sequence length="276" mass="31881">MTETWNFINTGSKDPYYNMAMDEALLNFVSRGEIDPVIRFYTWNPATLSIGYFQRLQKEIDIDKVKEKGFGLVRRQTGGRGVLHDKELTYSVIVPESHPNMPSTVTEAYRVISQGLLEGFKNLGFDTYFAVPKTPEERQKLKQPRSSVCFDAPSWYELVVEGRKIAGSAQTRQKGVILQHGSILQDIDIDELFDMFIYKNERLKLKMKEAFVEKAVAINDISDEHITISQMEEAFEKGFKKGLNIELKPLELTEAQLAEVEELTEKYRSDEWMFRK</sequence>
<protein>
    <recommendedName>
        <fullName evidence="1">Octanoyltransferase LipM</fullName>
        <ecNumber evidence="1">2.3.1.181</ecNumber>
    </recommendedName>
    <alternativeName>
        <fullName evidence="1">Octanoyl-[acyl-carrier-protein]:[GcvH] N-octanoyltransferase</fullName>
    </alternativeName>
</protein>
<dbReference type="EC" id="2.3.1.181" evidence="1"/>
<dbReference type="EMBL" id="CP000253">
    <property type="protein sequence ID" value="ABD30707.1"/>
    <property type="molecule type" value="Genomic_DNA"/>
</dbReference>
<dbReference type="RefSeq" id="WP_000141109.1">
    <property type="nucleotide sequence ID" value="NZ_LS483365.1"/>
</dbReference>
<dbReference type="RefSeq" id="YP_500143.1">
    <property type="nucleotide sequence ID" value="NC_007795.1"/>
</dbReference>
<dbReference type="SMR" id="Q2FY37"/>
<dbReference type="STRING" id="93061.SAOUHSC_01629"/>
<dbReference type="PaxDb" id="1280-SAXN108_1556"/>
<dbReference type="GeneID" id="3919967"/>
<dbReference type="KEGG" id="sao:SAOUHSC_01629"/>
<dbReference type="PATRIC" id="fig|93061.5.peg.1483"/>
<dbReference type="eggNOG" id="COG0095">
    <property type="taxonomic scope" value="Bacteria"/>
</dbReference>
<dbReference type="HOGENOM" id="CLU_022986_5_0_9"/>
<dbReference type="OrthoDB" id="9774653at2"/>
<dbReference type="PRO" id="PR:Q2FY37"/>
<dbReference type="Proteomes" id="UP000008816">
    <property type="component" value="Chromosome"/>
</dbReference>
<dbReference type="GO" id="GO:0033819">
    <property type="term" value="F:lipoyl(octanoyl) transferase activity"/>
    <property type="evidence" value="ECO:0007669"/>
    <property type="project" value="UniProtKB-UniRule"/>
</dbReference>
<dbReference type="GO" id="GO:0009107">
    <property type="term" value="P:lipoate biosynthetic process"/>
    <property type="evidence" value="ECO:0007669"/>
    <property type="project" value="UniProtKB-UniRule"/>
</dbReference>
<dbReference type="GO" id="GO:0036211">
    <property type="term" value="P:protein modification process"/>
    <property type="evidence" value="ECO:0007669"/>
    <property type="project" value="InterPro"/>
</dbReference>
<dbReference type="CDD" id="cd16443">
    <property type="entry name" value="LplA"/>
    <property type="match status" value="1"/>
</dbReference>
<dbReference type="Gene3D" id="3.30.930.10">
    <property type="entry name" value="Bira Bifunctional Protein, Domain 2"/>
    <property type="match status" value="1"/>
</dbReference>
<dbReference type="HAMAP" id="MF_02118">
    <property type="entry name" value="LipM"/>
    <property type="match status" value="1"/>
</dbReference>
<dbReference type="InterPro" id="IPR045864">
    <property type="entry name" value="aa-tRNA-synth_II/BPL/LPL"/>
</dbReference>
<dbReference type="InterPro" id="IPR004143">
    <property type="entry name" value="BPL_LPL_catalytic"/>
</dbReference>
<dbReference type="InterPro" id="IPR024898">
    <property type="entry name" value="LipM"/>
</dbReference>
<dbReference type="InterPro" id="IPR050664">
    <property type="entry name" value="Octanoyltrans_LipM/LipL"/>
</dbReference>
<dbReference type="PANTHER" id="PTHR43679:SF2">
    <property type="entry name" value="OCTANOYL-[GCVH]:PROTEIN N-OCTANOYLTRANSFERASE"/>
    <property type="match status" value="1"/>
</dbReference>
<dbReference type="PANTHER" id="PTHR43679">
    <property type="entry name" value="OCTANOYLTRANSFERASE LIPM-RELATED"/>
    <property type="match status" value="1"/>
</dbReference>
<dbReference type="Pfam" id="PF21948">
    <property type="entry name" value="LplA-B_cat"/>
    <property type="match status" value="1"/>
</dbReference>
<dbReference type="SUPFAM" id="SSF55681">
    <property type="entry name" value="Class II aaRS and biotin synthetases"/>
    <property type="match status" value="1"/>
</dbReference>
<dbReference type="PROSITE" id="PS51733">
    <property type="entry name" value="BPL_LPL_CATALYTIC"/>
    <property type="match status" value="1"/>
</dbReference>
<name>LIPM_STAA8</name>
<organism>
    <name type="scientific">Staphylococcus aureus (strain NCTC 8325 / PS 47)</name>
    <dbReference type="NCBI Taxonomy" id="93061"/>
    <lineage>
        <taxon>Bacteria</taxon>
        <taxon>Bacillati</taxon>
        <taxon>Bacillota</taxon>
        <taxon>Bacilli</taxon>
        <taxon>Bacillales</taxon>
        <taxon>Staphylococcaceae</taxon>
        <taxon>Staphylococcus</taxon>
    </lineage>
</organism>
<reference key="1">
    <citation type="book" date="2006" name="Gram positive pathogens, 2nd edition">
        <title>The Staphylococcus aureus NCTC 8325 genome.</title>
        <editorList>
            <person name="Fischetti V."/>
            <person name="Novick R."/>
            <person name="Ferretti J."/>
            <person name="Portnoy D."/>
            <person name="Rood J."/>
        </editorList>
        <authorList>
            <person name="Gillaspy A.F."/>
            <person name="Worrell V."/>
            <person name="Orvis J."/>
            <person name="Roe B.A."/>
            <person name="Dyer D.W."/>
            <person name="Iandolo J.J."/>
        </authorList>
    </citation>
    <scope>NUCLEOTIDE SEQUENCE [LARGE SCALE GENOMIC DNA]</scope>
    <source>
        <strain>NCTC 8325 / PS 47</strain>
    </source>
</reference>
<evidence type="ECO:0000255" key="1">
    <source>
        <dbReference type="HAMAP-Rule" id="MF_02118"/>
    </source>
</evidence>
<evidence type="ECO:0000255" key="2">
    <source>
        <dbReference type="PROSITE-ProRule" id="PRU01067"/>
    </source>
</evidence>
<accession>Q2FY37</accession>
<keyword id="KW-0012">Acyltransferase</keyword>
<keyword id="KW-1185">Reference proteome</keyword>
<keyword id="KW-0808">Transferase</keyword>
<gene>
    <name evidence="1" type="primary">lipM</name>
    <name type="ordered locus">SAOUHSC_01629</name>
</gene>
<feature type="chain" id="PRO_0000410863" description="Octanoyltransferase LipM">
    <location>
        <begin position="1"/>
        <end position="276"/>
    </location>
</feature>
<feature type="domain" description="BPL/LPL catalytic" evidence="2">
    <location>
        <begin position="32"/>
        <end position="247"/>
    </location>
</feature>
<feature type="active site" description="Acyl-thioester intermediate" evidence="1">
    <location>
        <position position="149"/>
    </location>
</feature>
<feature type="site" description="Lowers pKa of active site Cys" evidence="1">
    <location>
        <position position="164"/>
    </location>
</feature>
<proteinExistence type="inferred from homology"/>